<reference key="1">
    <citation type="journal article" date="2001" name="J. Bacteriol.">
        <title>Genome sequence and comparative analysis of the solvent-producing bacterium Clostridium acetobutylicum.</title>
        <authorList>
            <person name="Noelling J."/>
            <person name="Breton G."/>
            <person name="Omelchenko M.V."/>
            <person name="Makarova K.S."/>
            <person name="Zeng Q."/>
            <person name="Gibson R."/>
            <person name="Lee H.M."/>
            <person name="Dubois J."/>
            <person name="Qiu D."/>
            <person name="Hitti J."/>
            <person name="Wolf Y.I."/>
            <person name="Tatusov R.L."/>
            <person name="Sabathe F."/>
            <person name="Doucette-Stamm L.A."/>
            <person name="Soucaille P."/>
            <person name="Daly M.J."/>
            <person name="Bennett G.N."/>
            <person name="Koonin E.V."/>
            <person name="Smith D.R."/>
        </authorList>
    </citation>
    <scope>NUCLEOTIDE SEQUENCE [LARGE SCALE GENOMIC DNA]</scope>
    <source>
        <strain>ATCC 824 / DSM 792 / JCM 1419 / IAM 19013 / LMG 5710 / NBRC 13948 / NRRL B-527 / VKM B-1787 / 2291 / W</strain>
    </source>
</reference>
<organism>
    <name type="scientific">Clostridium acetobutylicum (strain ATCC 824 / DSM 792 / JCM 1419 / IAM 19013 / LMG 5710 / NBRC 13948 / NRRL B-527 / VKM B-1787 / 2291 / W)</name>
    <dbReference type="NCBI Taxonomy" id="272562"/>
    <lineage>
        <taxon>Bacteria</taxon>
        <taxon>Bacillati</taxon>
        <taxon>Bacillota</taxon>
        <taxon>Clostridia</taxon>
        <taxon>Eubacteriales</taxon>
        <taxon>Clostridiaceae</taxon>
        <taxon>Clostridium</taxon>
    </lineage>
</organism>
<accession>Q97JE4</accession>
<sequence>MLKNKKLEFWFVVGSQNLYGEEALNAVKKDSKEIVDSLNESGKLPYPIVFKTLATSADEIKNIVKEINYRDEVAGVITWMHTFSPAKMWIAGTKLLQKPLLHLATQFNENIPWKTIDMDYMNLHQSAHGDREYGFINARLNKNNKVVVGYWKDNQVQKEIAEWMQVAYGYVASENIKVARFGDNMRNVAVTEGDKVEAQIQFGWTVDYFAIGDLVAEMNKVSQKDIDATYEEFKDIYILDIGDNDPEFYENHVKEQIKIEIGLRNFLEAGNYTAFTTNFEDLYGMKQLPGLAVQRLNAEGYGFAGEGDWKTAALNRLFKIMTDNKKTGFMEDYTYELSAGNERILGAHMLEVDPTLAASKPRVVVKPLGIGDKEAPARLIFDGVVGDGVVVSMLDLGTHYRLLINEVKAVKPTEDAPNLPVAKLVWQPQPNFKDAVKAWIYAGGGHHTVATLELTVEQVYDWSRMVGLETIVIDHNTNLRDIIKETSR</sequence>
<feature type="chain" id="PRO_0000198383" description="L-arabinose isomerase 1">
    <location>
        <begin position="1"/>
        <end position="488"/>
    </location>
</feature>
<feature type="binding site" evidence="1">
    <location>
        <position position="306"/>
    </location>
    <ligand>
        <name>Mn(2+)</name>
        <dbReference type="ChEBI" id="CHEBI:29035"/>
    </ligand>
</feature>
<feature type="binding site" evidence="1">
    <location>
        <position position="331"/>
    </location>
    <ligand>
        <name>Mn(2+)</name>
        <dbReference type="ChEBI" id="CHEBI:29035"/>
    </ligand>
</feature>
<feature type="binding site" evidence="1">
    <location>
        <position position="348"/>
    </location>
    <ligand>
        <name>Mn(2+)</name>
        <dbReference type="ChEBI" id="CHEBI:29035"/>
    </ligand>
</feature>
<feature type="binding site" evidence="1">
    <location>
        <position position="447"/>
    </location>
    <ligand>
        <name>Mn(2+)</name>
        <dbReference type="ChEBI" id="CHEBI:29035"/>
    </ligand>
</feature>
<dbReference type="EC" id="5.3.1.4" evidence="1"/>
<dbReference type="EMBL" id="AE001437">
    <property type="protein sequence ID" value="AAK79310.1"/>
    <property type="molecule type" value="Genomic_DNA"/>
</dbReference>
<dbReference type="PIR" id="C97065">
    <property type="entry name" value="C97065"/>
</dbReference>
<dbReference type="RefSeq" id="NP_347970.1">
    <property type="nucleotide sequence ID" value="NC_003030.1"/>
</dbReference>
<dbReference type="SMR" id="Q97JE4"/>
<dbReference type="STRING" id="272562.CA_C1342"/>
<dbReference type="KEGG" id="cac:CA_C1342"/>
<dbReference type="PATRIC" id="fig|272562.8.peg.1547"/>
<dbReference type="eggNOG" id="COG2160">
    <property type="taxonomic scope" value="Bacteria"/>
</dbReference>
<dbReference type="HOGENOM" id="CLU_045663_0_0_9"/>
<dbReference type="OrthoDB" id="9765600at2"/>
<dbReference type="BRENDA" id="5.3.1.4">
    <property type="organism ID" value="1452"/>
</dbReference>
<dbReference type="UniPathway" id="UPA00145">
    <property type="reaction ID" value="UER00565"/>
</dbReference>
<dbReference type="Proteomes" id="UP000000814">
    <property type="component" value="Chromosome"/>
</dbReference>
<dbReference type="GO" id="GO:0005829">
    <property type="term" value="C:cytosol"/>
    <property type="evidence" value="ECO:0007669"/>
    <property type="project" value="TreeGrafter"/>
</dbReference>
<dbReference type="GO" id="GO:0008733">
    <property type="term" value="F:L-arabinose isomerase activity"/>
    <property type="evidence" value="ECO:0007669"/>
    <property type="project" value="UniProtKB-UniRule"/>
</dbReference>
<dbReference type="GO" id="GO:0030145">
    <property type="term" value="F:manganese ion binding"/>
    <property type="evidence" value="ECO:0007669"/>
    <property type="project" value="UniProtKB-UniRule"/>
</dbReference>
<dbReference type="GO" id="GO:0019569">
    <property type="term" value="P:L-arabinose catabolic process to xylulose 5-phosphate"/>
    <property type="evidence" value="ECO:0007669"/>
    <property type="project" value="UniProtKB-UniRule"/>
</dbReference>
<dbReference type="Gene3D" id="3.40.50.10940">
    <property type="match status" value="1"/>
</dbReference>
<dbReference type="HAMAP" id="MF_00519">
    <property type="entry name" value="Arabinose_Isome"/>
    <property type="match status" value="1"/>
</dbReference>
<dbReference type="InterPro" id="IPR024664">
    <property type="entry name" value="Ara_Isoase_C"/>
</dbReference>
<dbReference type="InterPro" id="IPR055390">
    <property type="entry name" value="AraA_central"/>
</dbReference>
<dbReference type="InterPro" id="IPR055389">
    <property type="entry name" value="AraA_N"/>
</dbReference>
<dbReference type="InterPro" id="IPR038583">
    <property type="entry name" value="AraA_N_sf"/>
</dbReference>
<dbReference type="InterPro" id="IPR004216">
    <property type="entry name" value="Fuc/Ara_isomerase_C"/>
</dbReference>
<dbReference type="InterPro" id="IPR009015">
    <property type="entry name" value="Fucose_isomerase_N/cen_sf"/>
</dbReference>
<dbReference type="InterPro" id="IPR003762">
    <property type="entry name" value="Lara_isomerase"/>
</dbReference>
<dbReference type="NCBIfam" id="NF002795">
    <property type="entry name" value="PRK02929.1"/>
    <property type="match status" value="1"/>
</dbReference>
<dbReference type="PANTHER" id="PTHR38464">
    <property type="entry name" value="L-ARABINOSE ISOMERASE"/>
    <property type="match status" value="1"/>
</dbReference>
<dbReference type="PANTHER" id="PTHR38464:SF1">
    <property type="entry name" value="L-ARABINOSE ISOMERASE"/>
    <property type="match status" value="1"/>
</dbReference>
<dbReference type="Pfam" id="PF24856">
    <property type="entry name" value="AraA_central"/>
    <property type="match status" value="1"/>
</dbReference>
<dbReference type="Pfam" id="PF02610">
    <property type="entry name" value="AraA_N"/>
    <property type="match status" value="1"/>
</dbReference>
<dbReference type="Pfam" id="PF11762">
    <property type="entry name" value="Arabinose_Iso_C"/>
    <property type="match status" value="1"/>
</dbReference>
<dbReference type="PIRSF" id="PIRSF001478">
    <property type="entry name" value="L-ara_isomerase"/>
    <property type="match status" value="1"/>
</dbReference>
<dbReference type="SUPFAM" id="SSF50443">
    <property type="entry name" value="FucI/AraA C-terminal domain-like"/>
    <property type="match status" value="1"/>
</dbReference>
<dbReference type="SUPFAM" id="SSF53743">
    <property type="entry name" value="FucI/AraA N-terminal and middle domains"/>
    <property type="match status" value="1"/>
</dbReference>
<evidence type="ECO:0000255" key="1">
    <source>
        <dbReference type="HAMAP-Rule" id="MF_00519"/>
    </source>
</evidence>
<comment type="function">
    <text evidence="1">Catalyzes the conversion of L-arabinose to L-ribulose.</text>
</comment>
<comment type="catalytic activity">
    <reaction evidence="1">
        <text>beta-L-arabinopyranose = L-ribulose</text>
        <dbReference type="Rhea" id="RHEA:14821"/>
        <dbReference type="ChEBI" id="CHEBI:16880"/>
        <dbReference type="ChEBI" id="CHEBI:40886"/>
        <dbReference type="EC" id="5.3.1.4"/>
    </reaction>
</comment>
<comment type="cofactor">
    <cofactor evidence="1">
        <name>Mn(2+)</name>
        <dbReference type="ChEBI" id="CHEBI:29035"/>
    </cofactor>
    <text evidence="1">Binds 1 Mn(2+) ion per subunit.</text>
</comment>
<comment type="pathway">
    <text evidence="1">Carbohydrate degradation; L-arabinose degradation via L-ribulose; D-xylulose 5-phosphate from L-arabinose (bacterial route): step 1/3.</text>
</comment>
<comment type="similarity">
    <text evidence="1">Belongs to the arabinose isomerase family.</text>
</comment>
<name>ARAA1_CLOAB</name>
<keyword id="KW-0054">Arabinose catabolism</keyword>
<keyword id="KW-0119">Carbohydrate metabolism</keyword>
<keyword id="KW-0413">Isomerase</keyword>
<keyword id="KW-0464">Manganese</keyword>
<keyword id="KW-0479">Metal-binding</keyword>
<keyword id="KW-1185">Reference proteome</keyword>
<proteinExistence type="inferred from homology"/>
<gene>
    <name evidence="1" type="primary">araA1</name>
    <name type="ordered locus">CA_C1342</name>
</gene>
<protein>
    <recommendedName>
        <fullName evidence="1">L-arabinose isomerase 1</fullName>
        <ecNumber evidence="1">5.3.1.4</ecNumber>
    </recommendedName>
</protein>